<accession>Q0T8X6</accession>
<protein>
    <recommendedName>
        <fullName evidence="1">Probable RNA 2'-phosphotransferase</fullName>
        <ecNumber evidence="1">2.7.1.-</ecNumber>
    </recommendedName>
</protein>
<gene>
    <name evidence="1" type="primary">kptA</name>
    <name type="ordered locus">ECP_4667</name>
</gene>
<name>KPTA_ECOL5</name>
<feature type="chain" id="PRO_1000022015" description="Probable RNA 2'-phosphotransferase">
    <location>
        <begin position="1"/>
        <end position="184"/>
    </location>
</feature>
<dbReference type="EC" id="2.7.1.-" evidence="1"/>
<dbReference type="EMBL" id="CP000247">
    <property type="protein sequence ID" value="ABG72603.1"/>
    <property type="molecule type" value="Genomic_DNA"/>
</dbReference>
<dbReference type="RefSeq" id="WP_001151841.1">
    <property type="nucleotide sequence ID" value="NC_008253.1"/>
</dbReference>
<dbReference type="SMR" id="Q0T8X6"/>
<dbReference type="KEGG" id="ecp:ECP_4667"/>
<dbReference type="HOGENOM" id="CLU_052998_4_0_6"/>
<dbReference type="Proteomes" id="UP000009182">
    <property type="component" value="Chromosome"/>
</dbReference>
<dbReference type="GO" id="GO:0003950">
    <property type="term" value="F:NAD+ poly-ADP-ribosyltransferase activity"/>
    <property type="evidence" value="ECO:0007669"/>
    <property type="project" value="InterPro"/>
</dbReference>
<dbReference type="GO" id="GO:0000215">
    <property type="term" value="F:tRNA 2'-phosphotransferase activity"/>
    <property type="evidence" value="ECO:0007669"/>
    <property type="project" value="TreeGrafter"/>
</dbReference>
<dbReference type="GO" id="GO:0006388">
    <property type="term" value="P:tRNA splicing, via endonucleolytic cleavage and ligation"/>
    <property type="evidence" value="ECO:0007669"/>
    <property type="project" value="UniProtKB-UniRule"/>
</dbReference>
<dbReference type="FunFam" id="1.10.10.970:FF:000001">
    <property type="entry name" value="RNA 2'-phosphotransferase"/>
    <property type="match status" value="1"/>
</dbReference>
<dbReference type="FunFam" id="3.20.170.30:FF:000001">
    <property type="entry name" value="RNA 2'-phosphotransferase"/>
    <property type="match status" value="1"/>
</dbReference>
<dbReference type="Gene3D" id="3.20.170.30">
    <property type="match status" value="1"/>
</dbReference>
<dbReference type="Gene3D" id="1.10.10.970">
    <property type="entry name" value="RNA 2'-phosphotransferase, Tpt1/KptA family, N-terminal domain"/>
    <property type="match status" value="1"/>
</dbReference>
<dbReference type="HAMAP" id="MF_00299">
    <property type="entry name" value="KptA"/>
    <property type="match status" value="1"/>
</dbReference>
<dbReference type="InterPro" id="IPR002745">
    <property type="entry name" value="Ptrans_KptA/Tpt1"/>
</dbReference>
<dbReference type="InterPro" id="IPR042081">
    <property type="entry name" value="RNA_2'-PTrans_C"/>
</dbReference>
<dbReference type="InterPro" id="IPR022928">
    <property type="entry name" value="RNA_2'-PTrans_KptA"/>
</dbReference>
<dbReference type="InterPro" id="IPR042080">
    <property type="entry name" value="RNA_2'-PTrans_N"/>
</dbReference>
<dbReference type="NCBIfam" id="NF002012">
    <property type="entry name" value="PRK00819.1-1"/>
    <property type="match status" value="1"/>
</dbReference>
<dbReference type="NCBIfam" id="NF002014">
    <property type="entry name" value="PRK00819.1-4"/>
    <property type="match status" value="1"/>
</dbReference>
<dbReference type="PANTHER" id="PTHR12684">
    <property type="entry name" value="PUTATIVE PHOSPHOTRANSFERASE"/>
    <property type="match status" value="1"/>
</dbReference>
<dbReference type="PANTHER" id="PTHR12684:SF2">
    <property type="entry name" value="TRNA 2'-PHOSPHOTRANSFERASE 1"/>
    <property type="match status" value="1"/>
</dbReference>
<dbReference type="Pfam" id="PF01885">
    <property type="entry name" value="PTS_2-RNA"/>
    <property type="match status" value="1"/>
</dbReference>
<dbReference type="SUPFAM" id="SSF56399">
    <property type="entry name" value="ADP-ribosylation"/>
    <property type="match status" value="1"/>
</dbReference>
<evidence type="ECO:0000255" key="1">
    <source>
        <dbReference type="HAMAP-Rule" id="MF_00299"/>
    </source>
</evidence>
<keyword id="KW-0520">NAD</keyword>
<keyword id="KW-0808">Transferase</keyword>
<reference key="1">
    <citation type="journal article" date="2006" name="Mol. Microbiol.">
        <title>Role of pathogenicity island-associated integrases in the genome plasticity of uropathogenic Escherichia coli strain 536.</title>
        <authorList>
            <person name="Hochhut B."/>
            <person name="Wilde C."/>
            <person name="Balling G."/>
            <person name="Middendorf B."/>
            <person name="Dobrindt U."/>
            <person name="Brzuszkiewicz E."/>
            <person name="Gottschalk G."/>
            <person name="Carniel E."/>
            <person name="Hacker J."/>
        </authorList>
    </citation>
    <scope>NUCLEOTIDE SEQUENCE [LARGE SCALE GENOMIC DNA]</scope>
    <source>
        <strain>536 / UPEC</strain>
    </source>
</reference>
<proteinExistence type="inferred from homology"/>
<comment type="function">
    <text evidence="1">Removes the 2'-phosphate from RNA via an intermediate in which the phosphate is ADP-ribosylated by NAD followed by a presumed transesterification to release the RNA and generate ADP-ribose 1''-2''-cyclic phosphate (APPR&gt;P). May function as an ADP-ribosylase.</text>
</comment>
<comment type="similarity">
    <text evidence="1">Belongs to the KptA/TPT1 family.</text>
</comment>
<organism>
    <name type="scientific">Escherichia coli O6:K15:H31 (strain 536 / UPEC)</name>
    <dbReference type="NCBI Taxonomy" id="362663"/>
    <lineage>
        <taxon>Bacteria</taxon>
        <taxon>Pseudomonadati</taxon>
        <taxon>Pseudomonadota</taxon>
        <taxon>Gammaproteobacteria</taxon>
        <taxon>Enterobacterales</taxon>
        <taxon>Enterobacteriaceae</taxon>
        <taxon>Escherichia</taxon>
    </lineage>
</organism>
<sequence>MAKYNDKELAETSKFLSFVLRHKPEAIGIVLDREGWADIDKLILCAQKAGKRLTRALLDTVVATSDKKRFSYSSDGTCIRAVQGHSTSQVAIAFIEKTPPQFLYHGTASRFLDEIKKQGLIAGERHYVHLSADEATARKVGARHGSPVILTVKAQEMAKRGIPFWQAENGVWLTSTVAVEFLEW</sequence>